<sequence>MDVTRLLLATLLVFLCFFTVYSHLPPEEKLRDDRSLRSNSSVNLLDFPSVSIVALNKKSKQISRKEAEKKRSSKKEASMKKVAQPRTPLSAPCVATRDSCKPPAPACCDPCASCQCRFFRSACSCRVLSLNC</sequence>
<dbReference type="EMBL" id="AB236880">
    <property type="protein sequence ID" value="BAE93028.1"/>
    <property type="molecule type" value="Genomic_DNA"/>
</dbReference>
<dbReference type="EMBL" id="EF094490">
    <property type="protein sequence ID" value="ABL84288.1"/>
    <property type="molecule type" value="Genomic_DNA"/>
</dbReference>
<dbReference type="GlyCosmos" id="Q1XGU6">
    <property type="glycosylation" value="1 site, No reported glycans"/>
</dbReference>
<dbReference type="GO" id="GO:0005615">
    <property type="term" value="C:extracellular space"/>
    <property type="evidence" value="ECO:0000250"/>
    <property type="project" value="UniProtKB"/>
</dbReference>
<dbReference type="GO" id="GO:0031779">
    <property type="term" value="F:melanocortin receptor binding"/>
    <property type="evidence" value="ECO:0007669"/>
    <property type="project" value="TreeGrafter"/>
</dbReference>
<dbReference type="GO" id="GO:0005184">
    <property type="term" value="F:neuropeptide hormone activity"/>
    <property type="evidence" value="ECO:0007669"/>
    <property type="project" value="TreeGrafter"/>
</dbReference>
<dbReference type="GO" id="GO:0009755">
    <property type="term" value="P:hormone-mediated signaling pathway"/>
    <property type="evidence" value="ECO:0007669"/>
    <property type="project" value="InterPro"/>
</dbReference>
<dbReference type="GO" id="GO:0042438">
    <property type="term" value="P:melanin biosynthetic process"/>
    <property type="evidence" value="ECO:0000250"/>
    <property type="project" value="UniProtKB"/>
</dbReference>
<dbReference type="GO" id="GO:0032438">
    <property type="term" value="P:melanosome organization"/>
    <property type="evidence" value="ECO:0007669"/>
    <property type="project" value="TreeGrafter"/>
</dbReference>
<dbReference type="FunFam" id="4.10.760.10:FF:000002">
    <property type="entry name" value="Agouti-signaling protein"/>
    <property type="match status" value="1"/>
</dbReference>
<dbReference type="Gene3D" id="4.10.760.10">
    <property type="entry name" value="Agouti domain"/>
    <property type="match status" value="1"/>
</dbReference>
<dbReference type="InterPro" id="IPR007733">
    <property type="entry name" value="Agouti"/>
</dbReference>
<dbReference type="InterPro" id="IPR027300">
    <property type="entry name" value="Agouti_dom"/>
</dbReference>
<dbReference type="InterPro" id="IPR036836">
    <property type="entry name" value="Agouti_dom_sf"/>
</dbReference>
<dbReference type="PANTHER" id="PTHR16551">
    <property type="entry name" value="AGOUTI RELATED"/>
    <property type="match status" value="1"/>
</dbReference>
<dbReference type="PANTHER" id="PTHR16551:SF1">
    <property type="entry name" value="AGOUTI-SIGNALING PROTEIN"/>
    <property type="match status" value="1"/>
</dbReference>
<dbReference type="Pfam" id="PF05039">
    <property type="entry name" value="Agouti"/>
    <property type="match status" value="1"/>
</dbReference>
<dbReference type="SMART" id="SM00792">
    <property type="entry name" value="Agouti"/>
    <property type="match status" value="1"/>
</dbReference>
<dbReference type="SUPFAM" id="SSF57055">
    <property type="entry name" value="Agouti-related protein"/>
    <property type="match status" value="1"/>
</dbReference>
<dbReference type="PROSITE" id="PS60024">
    <property type="entry name" value="AGOUTI_1"/>
    <property type="match status" value="1"/>
</dbReference>
<dbReference type="PROSITE" id="PS51150">
    <property type="entry name" value="AGOUTI_2"/>
    <property type="match status" value="1"/>
</dbReference>
<accession>Q1XGU6</accession>
<accession>A1YL73</accession>
<feature type="signal peptide" evidence="4">
    <location>
        <begin position="1"/>
        <end position="22"/>
    </location>
</feature>
<feature type="chain" id="PRO_0000235202" description="Agouti-signaling protein">
    <location>
        <begin position="23"/>
        <end position="132"/>
    </location>
</feature>
<feature type="domain" description="Agouti" evidence="5">
    <location>
        <begin position="93"/>
        <end position="132"/>
    </location>
</feature>
<feature type="region of interest" description="Disordered" evidence="6">
    <location>
        <begin position="62"/>
        <end position="93"/>
    </location>
</feature>
<feature type="compositionally biased region" description="Basic and acidic residues" evidence="6">
    <location>
        <begin position="63"/>
        <end position="79"/>
    </location>
</feature>
<feature type="glycosylation site" description="N-linked (GlcNAc...) asparagine" evidence="4">
    <location>
        <position position="39"/>
    </location>
</feature>
<feature type="disulfide bond" evidence="5">
    <location>
        <begin position="93"/>
        <end position="108"/>
    </location>
</feature>
<feature type="disulfide bond" evidence="5">
    <location>
        <begin position="100"/>
        <end position="114"/>
    </location>
</feature>
<feature type="disulfide bond" evidence="5">
    <location>
        <begin position="107"/>
        <end position="125"/>
    </location>
</feature>
<feature type="disulfide bond" evidence="5">
    <location>
        <begin position="111"/>
        <end position="132"/>
    </location>
</feature>
<feature type="disulfide bond" evidence="5">
    <location>
        <begin position="116"/>
        <end position="123"/>
    </location>
</feature>
<name>ASIP_TRACR</name>
<proteinExistence type="inferred from homology"/>
<organism>
    <name type="scientific">Trachypithecus cristatus</name>
    <name type="common">Silvered leaf-monkey</name>
    <name type="synonym">Presbytis cristata</name>
    <dbReference type="NCBI Taxonomy" id="122765"/>
    <lineage>
        <taxon>Eukaryota</taxon>
        <taxon>Metazoa</taxon>
        <taxon>Chordata</taxon>
        <taxon>Craniata</taxon>
        <taxon>Vertebrata</taxon>
        <taxon>Euteleostomi</taxon>
        <taxon>Mammalia</taxon>
        <taxon>Eutheria</taxon>
        <taxon>Euarchontoglires</taxon>
        <taxon>Primates</taxon>
        <taxon>Haplorrhini</taxon>
        <taxon>Catarrhini</taxon>
        <taxon>Cercopithecidae</taxon>
        <taxon>Colobinae</taxon>
        <taxon>Trachypithecus</taxon>
    </lineage>
</organism>
<comment type="function">
    <text evidence="3">Involved in the regulation of melanogenesis. The binding of ASP to MC1R precludes alpha-MSH initiated signaling and thus blocks production of cAMP, leading to a down-regulation of eumelanogenesis (brown/black pigment) and thus increasing synthesis of pheomelanin (yellow/red pigment) (By similarity).</text>
</comment>
<comment type="subcellular location">
    <subcellularLocation>
        <location evidence="2">Secreted</location>
    </subcellularLocation>
</comment>
<comment type="domain">
    <text evidence="1">The presence of a 'disulfide through disulfide knot' structurally defines this protein as a knottin.</text>
</comment>
<keyword id="KW-1015">Disulfide bond</keyword>
<keyword id="KW-0325">Glycoprotein</keyword>
<keyword id="KW-0960">Knottin</keyword>
<keyword id="KW-0964">Secreted</keyword>
<keyword id="KW-0732">Signal</keyword>
<protein>
    <recommendedName>
        <fullName>Agouti-signaling protein</fullName>
        <shortName>ASP</shortName>
    </recommendedName>
    <alternativeName>
        <fullName>Agouti switch protein</fullName>
    </alternativeName>
</protein>
<gene>
    <name type="primary">ASIP</name>
</gene>
<reference key="1">
    <citation type="journal article" date="2006" name="Genome Res.">
        <title>Alu-mediated 100-kb deletion in the primate genome: the loss of the agouti signaling protein gene in the lesser apes.</title>
        <authorList>
            <person name="Nakayama K."/>
            <person name="Ishida T."/>
        </authorList>
    </citation>
    <scope>NUCLEOTIDE SEQUENCE [GENOMIC DNA]</scope>
</reference>
<reference key="2">
    <citation type="journal article" date="2006" name="Mamm. Genome">
        <title>Investigation of the role of the agouti signaling protein gene (ASIP) in coat color evolution in primates.</title>
        <authorList>
            <person name="Mundy N.I."/>
            <person name="Kelly J."/>
        </authorList>
    </citation>
    <scope>NUCLEOTIDE SEQUENCE [GENOMIC DNA]</scope>
</reference>
<evidence type="ECO:0000250" key="1"/>
<evidence type="ECO:0000250" key="2">
    <source>
        <dbReference type="UniProtKB" id="P42127"/>
    </source>
</evidence>
<evidence type="ECO:0000250" key="3">
    <source>
        <dbReference type="UniProtKB" id="Q03288"/>
    </source>
</evidence>
<evidence type="ECO:0000255" key="4"/>
<evidence type="ECO:0000255" key="5">
    <source>
        <dbReference type="PROSITE-ProRule" id="PRU00494"/>
    </source>
</evidence>
<evidence type="ECO:0000256" key="6">
    <source>
        <dbReference type="SAM" id="MobiDB-lite"/>
    </source>
</evidence>